<protein>
    <recommendedName>
        <fullName evidence="1">Nucleotide-binding protein Plav_2177</fullName>
    </recommendedName>
</protein>
<accession>A7HV58</accession>
<gene>
    <name type="ordered locus">Plav_2177</name>
</gene>
<sequence length="161" mass="18304">MPSFDIVSKTDFAEIDNALQNVTREISQRYDFKGAHCTVERKDQELTINADDDLKLKQMHELLQGHLARRNVEAGVLDYKEPEKAAGQSVRQKVAIRDGLDKELAKRIVKDIKGSGLKVQVAIQGDELRVSGKKRDDLQAVIQFVKGLKIEQPLQYENFRD</sequence>
<organism>
    <name type="scientific">Parvibaculum lavamentivorans (strain DS-1 / DSM 13023 / NCIMB 13966)</name>
    <dbReference type="NCBI Taxonomy" id="402881"/>
    <lineage>
        <taxon>Bacteria</taxon>
        <taxon>Pseudomonadati</taxon>
        <taxon>Pseudomonadota</taxon>
        <taxon>Alphaproteobacteria</taxon>
        <taxon>Hyphomicrobiales</taxon>
        <taxon>Parvibaculaceae</taxon>
        <taxon>Parvibaculum</taxon>
    </lineage>
</organism>
<evidence type="ECO:0000255" key="1">
    <source>
        <dbReference type="HAMAP-Rule" id="MF_00632"/>
    </source>
</evidence>
<reference key="1">
    <citation type="journal article" date="2011" name="Stand. Genomic Sci.">
        <title>Complete genome sequence of Parvibaculum lavamentivorans type strain (DS-1(T)).</title>
        <authorList>
            <person name="Schleheck D."/>
            <person name="Weiss M."/>
            <person name="Pitluck S."/>
            <person name="Bruce D."/>
            <person name="Land M.L."/>
            <person name="Han S."/>
            <person name="Saunders E."/>
            <person name="Tapia R."/>
            <person name="Detter C."/>
            <person name="Brettin T."/>
            <person name="Han J."/>
            <person name="Woyke T."/>
            <person name="Goodwin L."/>
            <person name="Pennacchio L."/>
            <person name="Nolan M."/>
            <person name="Cook A.M."/>
            <person name="Kjelleberg S."/>
            <person name="Thomas T."/>
        </authorList>
    </citation>
    <scope>NUCLEOTIDE SEQUENCE [LARGE SCALE GENOMIC DNA]</scope>
    <source>
        <strain>DS-1 / DSM 13023 / NCIMB 13966</strain>
    </source>
</reference>
<keyword id="KW-0547">Nucleotide-binding</keyword>
<keyword id="KW-1185">Reference proteome</keyword>
<name>Y2177_PARL1</name>
<feature type="chain" id="PRO_1000072663" description="Nucleotide-binding protein Plav_2177">
    <location>
        <begin position="1"/>
        <end position="161"/>
    </location>
</feature>
<proteinExistence type="inferred from homology"/>
<comment type="function">
    <text evidence="1">Nucleotide-binding protein.</text>
</comment>
<comment type="similarity">
    <text evidence="1">Belongs to the YajQ family.</text>
</comment>
<dbReference type="EMBL" id="CP000774">
    <property type="protein sequence ID" value="ABS63791.1"/>
    <property type="molecule type" value="Genomic_DNA"/>
</dbReference>
<dbReference type="RefSeq" id="WP_012111096.1">
    <property type="nucleotide sequence ID" value="NC_009719.1"/>
</dbReference>
<dbReference type="SMR" id="A7HV58"/>
<dbReference type="STRING" id="402881.Plav_2177"/>
<dbReference type="KEGG" id="pla:Plav_2177"/>
<dbReference type="eggNOG" id="COG1666">
    <property type="taxonomic scope" value="Bacteria"/>
</dbReference>
<dbReference type="HOGENOM" id="CLU_099839_1_0_5"/>
<dbReference type="OrthoDB" id="9801447at2"/>
<dbReference type="Proteomes" id="UP000006377">
    <property type="component" value="Chromosome"/>
</dbReference>
<dbReference type="GO" id="GO:0005829">
    <property type="term" value="C:cytosol"/>
    <property type="evidence" value="ECO:0007669"/>
    <property type="project" value="TreeGrafter"/>
</dbReference>
<dbReference type="GO" id="GO:0000166">
    <property type="term" value="F:nucleotide binding"/>
    <property type="evidence" value="ECO:0007669"/>
    <property type="project" value="TreeGrafter"/>
</dbReference>
<dbReference type="CDD" id="cd11740">
    <property type="entry name" value="YajQ_like"/>
    <property type="match status" value="1"/>
</dbReference>
<dbReference type="Gene3D" id="3.30.70.860">
    <property type="match status" value="1"/>
</dbReference>
<dbReference type="Gene3D" id="3.30.70.990">
    <property type="entry name" value="YajQ-like, domain 2"/>
    <property type="match status" value="1"/>
</dbReference>
<dbReference type="HAMAP" id="MF_00632">
    <property type="entry name" value="YajQ"/>
    <property type="match status" value="1"/>
</dbReference>
<dbReference type="InterPro" id="IPR007551">
    <property type="entry name" value="DUF520"/>
</dbReference>
<dbReference type="InterPro" id="IPR035571">
    <property type="entry name" value="UPF0234-like_C"/>
</dbReference>
<dbReference type="InterPro" id="IPR035570">
    <property type="entry name" value="UPF0234_N"/>
</dbReference>
<dbReference type="InterPro" id="IPR036183">
    <property type="entry name" value="YajQ-like_sf"/>
</dbReference>
<dbReference type="NCBIfam" id="NF003819">
    <property type="entry name" value="PRK05412.1"/>
    <property type="match status" value="1"/>
</dbReference>
<dbReference type="PANTHER" id="PTHR30476">
    <property type="entry name" value="UPF0234 PROTEIN YAJQ"/>
    <property type="match status" value="1"/>
</dbReference>
<dbReference type="PANTHER" id="PTHR30476:SF0">
    <property type="entry name" value="UPF0234 PROTEIN YAJQ"/>
    <property type="match status" value="1"/>
</dbReference>
<dbReference type="Pfam" id="PF04461">
    <property type="entry name" value="DUF520"/>
    <property type="match status" value="1"/>
</dbReference>
<dbReference type="SUPFAM" id="SSF89963">
    <property type="entry name" value="YajQ-like"/>
    <property type="match status" value="2"/>
</dbReference>